<sequence>PGITXTSLHVAPGARLAVKGDIPAGAKSWVINLGKGENDIMLHFNARFDAHGDIRTIV</sequence>
<evidence type="ECO:0000250" key="1"/>
<evidence type="ECO:0000255" key="2">
    <source>
        <dbReference type="PROSITE-ProRule" id="PRU00639"/>
    </source>
</evidence>
<evidence type="ECO:0000269" key="3">
    <source>
    </source>
</evidence>
<proteinExistence type="evidence at protein level"/>
<comment type="function">
    <text evidence="1 3">May regulate cell apoptosis and cell differentiation. Binds beta-galactoside and a wide array of complex carbohydrates (By similarity).</text>
</comment>
<comment type="subunit">
    <text>Monomer.</text>
</comment>
<comment type="subcellular location">
    <subcellularLocation>
        <location evidence="1">Secreted</location>
        <location evidence="1">Extracellular space</location>
        <location evidence="1">Extracellular matrix</location>
    </subcellularLocation>
</comment>
<comment type="tissue specificity">
    <text>Detected in most tissues, most abundantly in skin.</text>
</comment>
<comment type="mass spectrometry"/>
<feature type="chain" id="PRO_0000076923" description="Galectin-1">
    <location>
        <begin position="1"/>
        <end position="58" status="greater than"/>
    </location>
</feature>
<feature type="domain" description="Galectin" evidence="2">
    <location>
        <begin position="2"/>
        <end position="58" status="greater than"/>
    </location>
</feature>
<feature type="binding site" evidence="1">
    <location>
        <begin position="43"/>
        <end position="47"/>
    </location>
    <ligand>
        <name>a beta-D-galactoside</name>
        <dbReference type="ChEBI" id="CHEBI:28034"/>
    </ligand>
</feature>
<feature type="binding site" evidence="1">
    <location>
        <position position="51"/>
    </location>
    <ligand>
        <name>a beta-D-galactoside</name>
        <dbReference type="ChEBI" id="CHEBI:28034"/>
    </ligand>
</feature>
<feature type="non-terminal residue">
    <location>
        <position position="58"/>
    </location>
</feature>
<reference key="1">
    <citation type="journal article" date="2000" name="Glycobiology">
        <title>Description of a monomeric prototype galectin from the lizard Podarcis hispanica.</title>
        <authorList>
            <person name="Solis D."/>
            <person name="Lopez-Lucendo M.I.F."/>
            <person name="Leon S."/>
            <person name="Varela J."/>
            <person name="Diaz-Maurino T."/>
        </authorList>
    </citation>
    <scope>PROTEIN SEQUENCE</scope>
    <scope>FUNCTION</scope>
    <scope>MASS SPECTROMETRY</scope>
    <source>
        <tissue>Skin</tissue>
    </source>
</reference>
<keyword id="KW-0903">Direct protein sequencing</keyword>
<keyword id="KW-0272">Extracellular matrix</keyword>
<keyword id="KW-0430">Lectin</keyword>
<keyword id="KW-0964">Secreted</keyword>
<dbReference type="GO" id="GO:0005576">
    <property type="term" value="C:extracellular region"/>
    <property type="evidence" value="ECO:0007669"/>
    <property type="project" value="UniProtKB-KW"/>
</dbReference>
<dbReference type="GO" id="GO:0030246">
    <property type="term" value="F:carbohydrate binding"/>
    <property type="evidence" value="ECO:0007669"/>
    <property type="project" value="UniProtKB-KW"/>
</dbReference>
<dbReference type="Gene3D" id="2.60.120.200">
    <property type="match status" value="1"/>
</dbReference>
<dbReference type="InterPro" id="IPR013320">
    <property type="entry name" value="ConA-like_dom_sf"/>
</dbReference>
<dbReference type="InterPro" id="IPR001079">
    <property type="entry name" value="Galectin_CRD"/>
</dbReference>
<dbReference type="Pfam" id="PF00337">
    <property type="entry name" value="Gal-bind_lectin"/>
    <property type="match status" value="1"/>
</dbReference>
<dbReference type="SUPFAM" id="SSF49899">
    <property type="entry name" value="Concanavalin A-like lectins/glucanases"/>
    <property type="match status" value="1"/>
</dbReference>
<dbReference type="PROSITE" id="PS51304">
    <property type="entry name" value="GALECTIN"/>
    <property type="match status" value="1"/>
</dbReference>
<accession>P82447</accession>
<protein>
    <recommendedName>
        <fullName>Galectin-1</fullName>
        <shortName>Gal-1</shortName>
    </recommendedName>
</protein>
<name>LEG1_PODHI</name>
<organism>
    <name type="scientific">Podarcis hispanicus</name>
    <name type="common">Iberian wall lizard</name>
    <dbReference type="NCBI Taxonomy" id="74081"/>
    <lineage>
        <taxon>Eukaryota</taxon>
        <taxon>Metazoa</taxon>
        <taxon>Chordata</taxon>
        <taxon>Craniata</taxon>
        <taxon>Vertebrata</taxon>
        <taxon>Euteleostomi</taxon>
        <taxon>Lepidosauria</taxon>
        <taxon>Squamata</taxon>
        <taxon>Bifurcata</taxon>
        <taxon>Unidentata</taxon>
        <taxon>Episquamata</taxon>
        <taxon>Laterata</taxon>
        <taxon>Lacertibaenia</taxon>
        <taxon>Lacertidae</taxon>
        <taxon>Podarcis</taxon>
    </lineage>
</organism>